<dbReference type="EMBL" id="CP000800">
    <property type="protein sequence ID" value="ABV19126.1"/>
    <property type="molecule type" value="Genomic_DNA"/>
</dbReference>
<dbReference type="RefSeq" id="WP_000208757.1">
    <property type="nucleotide sequence ID" value="NC_009801.1"/>
</dbReference>
<dbReference type="SMR" id="A7ZV25"/>
<dbReference type="GeneID" id="93777670"/>
<dbReference type="KEGG" id="ecw:EcE24377A_4711"/>
<dbReference type="HOGENOM" id="CLU_156492_0_0_6"/>
<dbReference type="Proteomes" id="UP000001122">
    <property type="component" value="Chromosome"/>
</dbReference>
<dbReference type="GO" id="GO:0045283">
    <property type="term" value="C:fumarate reductase complex"/>
    <property type="evidence" value="ECO:0007669"/>
    <property type="project" value="UniProtKB-UniRule"/>
</dbReference>
<dbReference type="GO" id="GO:0005886">
    <property type="term" value="C:plasma membrane"/>
    <property type="evidence" value="ECO:0007669"/>
    <property type="project" value="UniProtKB-SubCell"/>
</dbReference>
<dbReference type="GO" id="GO:0000104">
    <property type="term" value="F:succinate dehydrogenase activity"/>
    <property type="evidence" value="ECO:0007669"/>
    <property type="project" value="UniProtKB-UniRule"/>
</dbReference>
<dbReference type="CDD" id="cd00546">
    <property type="entry name" value="QFR_TypeD_subunitC"/>
    <property type="match status" value="1"/>
</dbReference>
<dbReference type="FunFam" id="1.20.1300.10:FF:000003">
    <property type="entry name" value="Fumarate reductase subunit C"/>
    <property type="match status" value="1"/>
</dbReference>
<dbReference type="Gene3D" id="1.20.1300.10">
    <property type="entry name" value="Fumarate reductase/succinate dehydrogenase, transmembrane subunit"/>
    <property type="match status" value="1"/>
</dbReference>
<dbReference type="HAMAP" id="MF_00708">
    <property type="entry name" value="Fumarate_red_C"/>
    <property type="match status" value="1"/>
</dbReference>
<dbReference type="InterPro" id="IPR003510">
    <property type="entry name" value="Fumarate_red_C"/>
</dbReference>
<dbReference type="InterPro" id="IPR034804">
    <property type="entry name" value="SQR/QFR_C/D"/>
</dbReference>
<dbReference type="NCBIfam" id="NF003445">
    <property type="entry name" value="PRK04987.1"/>
    <property type="match status" value="1"/>
</dbReference>
<dbReference type="Pfam" id="PF02300">
    <property type="entry name" value="Fumarate_red_C"/>
    <property type="match status" value="1"/>
</dbReference>
<dbReference type="PIRSF" id="PIRSF000180">
    <property type="entry name" value="FrdC"/>
    <property type="match status" value="1"/>
</dbReference>
<dbReference type="SUPFAM" id="SSF81343">
    <property type="entry name" value="Fumarate reductase respiratory complex transmembrane subunits"/>
    <property type="match status" value="1"/>
</dbReference>
<name>FRDC_ECO24</name>
<proteinExistence type="inferred from homology"/>
<reference key="1">
    <citation type="journal article" date="2008" name="J. Bacteriol.">
        <title>The pangenome structure of Escherichia coli: comparative genomic analysis of E. coli commensal and pathogenic isolates.</title>
        <authorList>
            <person name="Rasko D.A."/>
            <person name="Rosovitz M.J."/>
            <person name="Myers G.S.A."/>
            <person name="Mongodin E.F."/>
            <person name="Fricke W.F."/>
            <person name="Gajer P."/>
            <person name="Crabtree J."/>
            <person name="Sebaihia M."/>
            <person name="Thomson N.R."/>
            <person name="Chaudhuri R."/>
            <person name="Henderson I.R."/>
            <person name="Sperandio V."/>
            <person name="Ravel J."/>
        </authorList>
    </citation>
    <scope>NUCLEOTIDE SEQUENCE [LARGE SCALE GENOMIC DNA]</scope>
    <source>
        <strain>E24377A / ETEC</strain>
    </source>
</reference>
<gene>
    <name evidence="1" type="primary">frdC</name>
    <name type="ordered locus">EcE24377A_4711</name>
</gene>
<accession>A7ZV25</accession>
<protein>
    <recommendedName>
        <fullName evidence="1">Fumarate reductase subunit C</fullName>
    </recommendedName>
    <alternativeName>
        <fullName evidence="1">Fumarate reductase 15 kDa hydrophobic protein</fullName>
    </alternativeName>
    <alternativeName>
        <fullName evidence="1">Quinol-fumarate reductase subunit C</fullName>
        <shortName evidence="1">QFR subunit C</shortName>
    </alternativeName>
</protein>
<evidence type="ECO:0000255" key="1">
    <source>
        <dbReference type="HAMAP-Rule" id="MF_00708"/>
    </source>
</evidence>
<feature type="chain" id="PRO_1000062063" description="Fumarate reductase subunit C">
    <location>
        <begin position="1"/>
        <end position="131"/>
    </location>
</feature>
<feature type="transmembrane region" description="Helical" evidence="1">
    <location>
        <begin position="30"/>
        <end position="50"/>
    </location>
</feature>
<feature type="transmembrane region" description="Helical" evidence="1">
    <location>
        <begin position="63"/>
        <end position="83"/>
    </location>
</feature>
<feature type="transmembrane region" description="Helical" evidence="1">
    <location>
        <begin position="109"/>
        <end position="129"/>
    </location>
</feature>
<keyword id="KW-0997">Cell inner membrane</keyword>
<keyword id="KW-1003">Cell membrane</keyword>
<keyword id="KW-0472">Membrane</keyword>
<keyword id="KW-1185">Reference proteome</keyword>
<keyword id="KW-0812">Transmembrane</keyword>
<keyword id="KW-1133">Transmembrane helix</keyword>
<sequence length="131" mass="15015">MTTKRKPYVRPMTSTWWKKLPFYRFYMLREGTAVPAVWFSIELIFGLFALKNGPEAWAGFVDFLQNPVIVIINLITLAAALLHTKTWFELAPKAANIIVKDEKMGPEPIIKSLWAVTVVATIVILFVALYW</sequence>
<organism>
    <name type="scientific">Escherichia coli O139:H28 (strain E24377A / ETEC)</name>
    <dbReference type="NCBI Taxonomy" id="331111"/>
    <lineage>
        <taxon>Bacteria</taxon>
        <taxon>Pseudomonadati</taxon>
        <taxon>Pseudomonadota</taxon>
        <taxon>Gammaproteobacteria</taxon>
        <taxon>Enterobacterales</taxon>
        <taxon>Enterobacteriaceae</taxon>
        <taxon>Escherichia</taxon>
    </lineage>
</organism>
<comment type="function">
    <text evidence="1">Two distinct, membrane-bound, FAD-containing enzymes are responsible for the catalysis of fumarate and succinate interconversion; fumarate reductase is used in anaerobic growth, and succinate dehydrogenase is used in aerobic growth. Anchors the catalytic components of the fumarate reductase complex to the cell inner membrane, binds quinones.</text>
</comment>
<comment type="subunit">
    <text evidence="1">Part of an enzyme complex containing four subunits: a flavoprotein (FrdA), an iron-sulfur protein (FrdB), and two hydrophobic anchor proteins (FrdC and FrdD).</text>
</comment>
<comment type="subcellular location">
    <subcellularLocation>
        <location evidence="1">Cell inner membrane</location>
        <topology evidence="1">Multi-pass membrane protein</topology>
    </subcellularLocation>
</comment>
<comment type="similarity">
    <text evidence="1">Belongs to the FrdC family.</text>
</comment>